<accession>B8DE31</accession>
<feature type="chain" id="PRO_1000194250" description="Small ribosomal subunit protein bS20">
    <location>
        <begin position="1"/>
        <end position="84"/>
    </location>
</feature>
<feature type="region of interest" description="Disordered" evidence="2">
    <location>
        <begin position="1"/>
        <end position="28"/>
    </location>
</feature>
<dbReference type="EMBL" id="CP001175">
    <property type="protein sequence ID" value="ACK39438.1"/>
    <property type="molecule type" value="Genomic_DNA"/>
</dbReference>
<dbReference type="RefSeq" id="WP_003726526.1">
    <property type="nucleotide sequence ID" value="NC_011660.1"/>
</dbReference>
<dbReference type="SMR" id="B8DE31"/>
<dbReference type="GeneID" id="93239357"/>
<dbReference type="KEGG" id="lmh:LMHCC_1090"/>
<dbReference type="HOGENOM" id="CLU_160655_1_0_9"/>
<dbReference type="GO" id="GO:0005829">
    <property type="term" value="C:cytosol"/>
    <property type="evidence" value="ECO:0007669"/>
    <property type="project" value="TreeGrafter"/>
</dbReference>
<dbReference type="GO" id="GO:0015935">
    <property type="term" value="C:small ribosomal subunit"/>
    <property type="evidence" value="ECO:0007669"/>
    <property type="project" value="TreeGrafter"/>
</dbReference>
<dbReference type="GO" id="GO:0070181">
    <property type="term" value="F:small ribosomal subunit rRNA binding"/>
    <property type="evidence" value="ECO:0007669"/>
    <property type="project" value="TreeGrafter"/>
</dbReference>
<dbReference type="GO" id="GO:0003735">
    <property type="term" value="F:structural constituent of ribosome"/>
    <property type="evidence" value="ECO:0007669"/>
    <property type="project" value="InterPro"/>
</dbReference>
<dbReference type="GO" id="GO:0006412">
    <property type="term" value="P:translation"/>
    <property type="evidence" value="ECO:0007669"/>
    <property type="project" value="UniProtKB-UniRule"/>
</dbReference>
<dbReference type="FunFam" id="1.20.58.110:FF:000001">
    <property type="entry name" value="30S ribosomal protein S20"/>
    <property type="match status" value="1"/>
</dbReference>
<dbReference type="Gene3D" id="1.20.58.110">
    <property type="entry name" value="Ribosomal protein S20"/>
    <property type="match status" value="1"/>
</dbReference>
<dbReference type="HAMAP" id="MF_00500">
    <property type="entry name" value="Ribosomal_bS20"/>
    <property type="match status" value="1"/>
</dbReference>
<dbReference type="InterPro" id="IPR002583">
    <property type="entry name" value="Ribosomal_bS20"/>
</dbReference>
<dbReference type="InterPro" id="IPR036510">
    <property type="entry name" value="Ribosomal_bS20_sf"/>
</dbReference>
<dbReference type="NCBIfam" id="TIGR00029">
    <property type="entry name" value="S20"/>
    <property type="match status" value="1"/>
</dbReference>
<dbReference type="PANTHER" id="PTHR33398">
    <property type="entry name" value="30S RIBOSOMAL PROTEIN S20"/>
    <property type="match status" value="1"/>
</dbReference>
<dbReference type="PANTHER" id="PTHR33398:SF1">
    <property type="entry name" value="SMALL RIBOSOMAL SUBUNIT PROTEIN BS20C"/>
    <property type="match status" value="1"/>
</dbReference>
<dbReference type="Pfam" id="PF01649">
    <property type="entry name" value="Ribosomal_S20p"/>
    <property type="match status" value="1"/>
</dbReference>
<dbReference type="SUPFAM" id="SSF46992">
    <property type="entry name" value="Ribosomal protein S20"/>
    <property type="match status" value="1"/>
</dbReference>
<evidence type="ECO:0000255" key="1">
    <source>
        <dbReference type="HAMAP-Rule" id="MF_00500"/>
    </source>
</evidence>
<evidence type="ECO:0000256" key="2">
    <source>
        <dbReference type="SAM" id="MobiDB-lite"/>
    </source>
</evidence>
<evidence type="ECO:0000305" key="3"/>
<protein>
    <recommendedName>
        <fullName evidence="1">Small ribosomal subunit protein bS20</fullName>
    </recommendedName>
    <alternativeName>
        <fullName evidence="3">30S ribosomal protein S20</fullName>
    </alternativeName>
</protein>
<gene>
    <name evidence="1" type="primary">rpsT</name>
    <name type="ordered locus">LMHCC_1090</name>
</gene>
<keyword id="KW-0687">Ribonucleoprotein</keyword>
<keyword id="KW-0689">Ribosomal protein</keyword>
<keyword id="KW-0694">RNA-binding</keyword>
<keyword id="KW-0699">rRNA-binding</keyword>
<name>RS20_LISMH</name>
<organism>
    <name type="scientific">Listeria monocytogenes serotype 4a (strain HCC23)</name>
    <dbReference type="NCBI Taxonomy" id="552536"/>
    <lineage>
        <taxon>Bacteria</taxon>
        <taxon>Bacillati</taxon>
        <taxon>Bacillota</taxon>
        <taxon>Bacilli</taxon>
        <taxon>Bacillales</taxon>
        <taxon>Listeriaceae</taxon>
        <taxon>Listeria</taxon>
    </lineage>
</organism>
<sequence>MPNIKSAIKRVKTAETRNSRNASQRSAMRTAIKKFDEAAANNADNAKDLYVEASKKLDSAVSKGLIHKNNAARNKSRLAAKLAK</sequence>
<reference key="1">
    <citation type="journal article" date="2011" name="J. Bacteriol.">
        <title>Genome sequence of lineage III Listeria monocytogenes strain HCC23.</title>
        <authorList>
            <person name="Steele C.L."/>
            <person name="Donaldson J.R."/>
            <person name="Paul D."/>
            <person name="Banes M.M."/>
            <person name="Arick T."/>
            <person name="Bridges S.M."/>
            <person name="Lawrence M.L."/>
        </authorList>
    </citation>
    <scope>NUCLEOTIDE SEQUENCE [LARGE SCALE GENOMIC DNA]</scope>
    <source>
        <strain>HCC23</strain>
    </source>
</reference>
<proteinExistence type="inferred from homology"/>
<comment type="function">
    <text evidence="1">Binds directly to 16S ribosomal RNA.</text>
</comment>
<comment type="similarity">
    <text evidence="1">Belongs to the bacterial ribosomal protein bS20 family.</text>
</comment>